<dbReference type="EC" id="3.6.1.15" evidence="1"/>
<dbReference type="EC" id="3.6.1.6" evidence="1"/>
<dbReference type="EMBL" id="FM242711">
    <property type="protein sequence ID" value="CAS05461.1"/>
    <property type="molecule type" value="Genomic_DNA"/>
</dbReference>
<dbReference type="RefSeq" id="WP_003723875.1">
    <property type="nucleotide sequence ID" value="NC_012488.1"/>
</dbReference>
<dbReference type="SMR" id="C1KVY6"/>
<dbReference type="KEGG" id="lmc:Lm4b_01701"/>
<dbReference type="HOGENOM" id="CLU_109787_1_0_9"/>
<dbReference type="GO" id="GO:0000287">
    <property type="term" value="F:magnesium ion binding"/>
    <property type="evidence" value="ECO:0007669"/>
    <property type="project" value="UniProtKB-UniRule"/>
</dbReference>
<dbReference type="GO" id="GO:0017110">
    <property type="term" value="F:nucleoside diphosphate phosphatase activity"/>
    <property type="evidence" value="ECO:0007669"/>
    <property type="project" value="UniProtKB-UniRule"/>
</dbReference>
<dbReference type="GO" id="GO:0017111">
    <property type="term" value="F:ribonucleoside triphosphate phosphatase activity"/>
    <property type="evidence" value="ECO:0007669"/>
    <property type="project" value="UniProtKB-UniRule"/>
</dbReference>
<dbReference type="Gene3D" id="2.40.380.10">
    <property type="entry name" value="FomD-like"/>
    <property type="match status" value="1"/>
</dbReference>
<dbReference type="HAMAP" id="MF_01568">
    <property type="entry name" value="Ntdp"/>
    <property type="match status" value="1"/>
</dbReference>
<dbReference type="InterPro" id="IPR007295">
    <property type="entry name" value="DUF402"/>
</dbReference>
<dbReference type="InterPro" id="IPR035930">
    <property type="entry name" value="FomD-like_sf"/>
</dbReference>
<dbReference type="InterPro" id="IPR050212">
    <property type="entry name" value="Ntdp-like"/>
</dbReference>
<dbReference type="InterPro" id="IPR016882">
    <property type="entry name" value="SA1684"/>
</dbReference>
<dbReference type="NCBIfam" id="NF010183">
    <property type="entry name" value="PRK13662.1"/>
    <property type="match status" value="1"/>
</dbReference>
<dbReference type="PANTHER" id="PTHR39159">
    <property type="match status" value="1"/>
</dbReference>
<dbReference type="PANTHER" id="PTHR39159:SF1">
    <property type="entry name" value="UPF0374 PROTEIN YGAC"/>
    <property type="match status" value="1"/>
</dbReference>
<dbReference type="Pfam" id="PF04167">
    <property type="entry name" value="DUF402"/>
    <property type="match status" value="1"/>
</dbReference>
<dbReference type="PIRSF" id="PIRSF028345">
    <property type="entry name" value="UCP028345"/>
    <property type="match status" value="1"/>
</dbReference>
<dbReference type="SUPFAM" id="SSF159234">
    <property type="entry name" value="FomD-like"/>
    <property type="match status" value="1"/>
</dbReference>
<protein>
    <recommendedName>
        <fullName evidence="1">Nucleoside triphosphate/diphosphate phosphatase</fullName>
        <ecNumber evidence="1">3.6.1.15</ecNumber>
        <ecNumber evidence="1">3.6.1.6</ecNumber>
    </recommendedName>
</protein>
<gene>
    <name type="ordered locus">Lm4b_01701</name>
</gene>
<sequence length="175" mass="21134">MYLPKEKEIIQIKSYKHNGKLHRTWKKTVVLKSTENIIIGGNDHTLVVEADGRKWVTREPSICYFHSDYWFNVISMIREDGIYHYCNLGTPFAVDEQALKYIDYDLDIKVFPDGRFHLLDEGEYEQHRRQMKYPDSIDRILRHNVDVLSHWILDKKGPFSPDYIDIWYEKYKEYR</sequence>
<name>NTDP_LISMC</name>
<reference key="1">
    <citation type="journal article" date="2012" name="BMC Genomics">
        <title>Comparative genomics and transcriptomics of lineages I, II, and III strains of Listeria monocytogenes.</title>
        <authorList>
            <person name="Hain T."/>
            <person name="Ghai R."/>
            <person name="Billion A."/>
            <person name="Kuenne C.T."/>
            <person name="Steinweg C."/>
            <person name="Izar B."/>
            <person name="Mohamed W."/>
            <person name="Mraheil M."/>
            <person name="Domann E."/>
            <person name="Schaffrath S."/>
            <person name="Karst U."/>
            <person name="Goesmann A."/>
            <person name="Oehm S."/>
            <person name="Puhler A."/>
            <person name="Merkl R."/>
            <person name="Vorwerk S."/>
            <person name="Glaser P."/>
            <person name="Garrido P."/>
            <person name="Rusniok C."/>
            <person name="Buchrieser C."/>
            <person name="Goebel W."/>
            <person name="Chakraborty T."/>
        </authorList>
    </citation>
    <scope>NUCLEOTIDE SEQUENCE [LARGE SCALE GENOMIC DNA]</scope>
    <source>
        <strain>CLIP80459</strain>
    </source>
</reference>
<comment type="function">
    <text evidence="1">Has nucleoside phosphatase activity towards nucleoside triphosphates and nucleoside diphosphates.</text>
</comment>
<comment type="catalytic activity">
    <reaction evidence="1">
        <text>a ribonucleoside 5'-triphosphate + H2O = a ribonucleoside 5'-diphosphate + phosphate + H(+)</text>
        <dbReference type="Rhea" id="RHEA:23680"/>
        <dbReference type="ChEBI" id="CHEBI:15377"/>
        <dbReference type="ChEBI" id="CHEBI:15378"/>
        <dbReference type="ChEBI" id="CHEBI:43474"/>
        <dbReference type="ChEBI" id="CHEBI:57930"/>
        <dbReference type="ChEBI" id="CHEBI:61557"/>
        <dbReference type="EC" id="3.6.1.15"/>
    </reaction>
</comment>
<comment type="catalytic activity">
    <reaction evidence="1">
        <text>a ribonucleoside 5'-diphosphate + H2O = a ribonucleoside 5'-phosphate + phosphate + H(+)</text>
        <dbReference type="Rhea" id="RHEA:36799"/>
        <dbReference type="ChEBI" id="CHEBI:15377"/>
        <dbReference type="ChEBI" id="CHEBI:15378"/>
        <dbReference type="ChEBI" id="CHEBI:43474"/>
        <dbReference type="ChEBI" id="CHEBI:57930"/>
        <dbReference type="ChEBI" id="CHEBI:58043"/>
        <dbReference type="EC" id="3.6.1.6"/>
    </reaction>
</comment>
<comment type="cofactor">
    <cofactor evidence="1">
        <name>Mg(2+)</name>
        <dbReference type="ChEBI" id="CHEBI:18420"/>
    </cofactor>
</comment>
<comment type="similarity">
    <text evidence="1">Belongs to the Ntdp family.</text>
</comment>
<feature type="chain" id="PRO_1000215522" description="Nucleoside triphosphate/diphosphate phosphatase">
    <location>
        <begin position="1"/>
        <end position="175"/>
    </location>
</feature>
<feature type="active site" description="Proton donor" evidence="1">
    <location>
        <position position="23"/>
    </location>
</feature>
<feature type="binding site" evidence="1">
    <location>
        <position position="87"/>
    </location>
    <ligand>
        <name>Mg(2+)</name>
        <dbReference type="ChEBI" id="CHEBI:18420"/>
        <label>1</label>
    </ligand>
</feature>
<feature type="binding site" evidence="1">
    <location>
        <position position="103"/>
    </location>
    <ligand>
        <name>Mg(2+)</name>
        <dbReference type="ChEBI" id="CHEBI:18420"/>
        <label>1</label>
    </ligand>
</feature>
<feature type="binding site" evidence="1">
    <location>
        <position position="105"/>
    </location>
    <ligand>
        <name>Mg(2+)</name>
        <dbReference type="ChEBI" id="CHEBI:18420"/>
        <label>2</label>
    </ligand>
</feature>
<feature type="binding site" evidence="1">
    <location>
        <position position="107"/>
    </location>
    <ligand>
        <name>Mg(2+)</name>
        <dbReference type="ChEBI" id="CHEBI:18420"/>
        <label>1</label>
    </ligand>
</feature>
<feature type="binding site" evidence="1">
    <location>
        <position position="107"/>
    </location>
    <ligand>
        <name>Mg(2+)</name>
        <dbReference type="ChEBI" id="CHEBI:18420"/>
        <label>2</label>
    </ligand>
</feature>
<feature type="binding site" evidence="1">
    <location>
        <position position="120"/>
    </location>
    <ligand>
        <name>Mg(2+)</name>
        <dbReference type="ChEBI" id="CHEBI:18420"/>
        <label>2</label>
    </ligand>
</feature>
<feature type="binding site" evidence="1">
    <location>
        <position position="123"/>
    </location>
    <ligand>
        <name>Mg(2+)</name>
        <dbReference type="ChEBI" id="CHEBI:18420"/>
        <label>2</label>
    </ligand>
</feature>
<proteinExistence type="inferred from homology"/>
<keyword id="KW-0378">Hydrolase</keyword>
<keyword id="KW-0460">Magnesium</keyword>
<keyword id="KW-0479">Metal-binding</keyword>
<accession>C1KVY6</accession>
<organism>
    <name type="scientific">Listeria monocytogenes serotype 4b (strain CLIP80459)</name>
    <dbReference type="NCBI Taxonomy" id="568819"/>
    <lineage>
        <taxon>Bacteria</taxon>
        <taxon>Bacillati</taxon>
        <taxon>Bacillota</taxon>
        <taxon>Bacilli</taxon>
        <taxon>Bacillales</taxon>
        <taxon>Listeriaceae</taxon>
        <taxon>Listeria</taxon>
    </lineage>
</organism>
<evidence type="ECO:0000255" key="1">
    <source>
        <dbReference type="HAMAP-Rule" id="MF_01568"/>
    </source>
</evidence>